<accession>B0C731</accession>
<reference key="1">
    <citation type="journal article" date="2008" name="Proc. Natl. Acad. Sci. U.S.A.">
        <title>Niche adaptation and genome expansion in the chlorophyll d-producing cyanobacterium Acaryochloris marina.</title>
        <authorList>
            <person name="Swingley W.D."/>
            <person name="Chen M."/>
            <person name="Cheung P.C."/>
            <person name="Conrad A.L."/>
            <person name="Dejesa L.C."/>
            <person name="Hao J."/>
            <person name="Honchak B.M."/>
            <person name="Karbach L.E."/>
            <person name="Kurdoglu A."/>
            <person name="Lahiri S."/>
            <person name="Mastrian S.D."/>
            <person name="Miyashita H."/>
            <person name="Page L."/>
            <person name="Ramakrishna P."/>
            <person name="Satoh S."/>
            <person name="Sattley W.M."/>
            <person name="Shimada Y."/>
            <person name="Taylor H.L."/>
            <person name="Tomo T."/>
            <person name="Tsuchiya T."/>
            <person name="Wang Z.T."/>
            <person name="Raymond J."/>
            <person name="Mimuro M."/>
            <person name="Blankenship R.E."/>
            <person name="Touchman J.W."/>
        </authorList>
    </citation>
    <scope>NUCLEOTIDE SEQUENCE [LARGE SCALE GENOMIC DNA]</scope>
    <source>
        <strain>MBIC 11017</strain>
    </source>
</reference>
<feature type="signal peptide" evidence="1">
    <location>
        <begin position="1"/>
        <end position="26"/>
    </location>
</feature>
<feature type="chain" id="PRO_1000087295" description="Photosystem II extrinsic protein V">
    <location>
        <begin position="27"/>
        <end position="162"/>
    </location>
</feature>
<feature type="binding site" description="covalent" evidence="1">
    <location>
        <position position="62"/>
    </location>
    <ligand>
        <name>heme c</name>
        <dbReference type="ChEBI" id="CHEBI:61717"/>
    </ligand>
</feature>
<feature type="binding site" description="covalent" evidence="1">
    <location>
        <position position="65"/>
    </location>
    <ligand>
        <name>heme c</name>
        <dbReference type="ChEBI" id="CHEBI:61717"/>
    </ligand>
</feature>
<feature type="binding site" description="axial binding residue" evidence="1">
    <location>
        <position position="66"/>
    </location>
    <ligand>
        <name>heme c</name>
        <dbReference type="ChEBI" id="CHEBI:61717"/>
    </ligand>
    <ligandPart>
        <name>Fe</name>
        <dbReference type="ChEBI" id="CHEBI:18248"/>
    </ligandPart>
</feature>
<feature type="binding site" description="axial binding residue" evidence="1">
    <location>
        <position position="117"/>
    </location>
    <ligand>
        <name>heme c</name>
        <dbReference type="ChEBI" id="CHEBI:61717"/>
    </ligand>
    <ligandPart>
        <name>Fe</name>
        <dbReference type="ChEBI" id="CHEBI:18248"/>
    </ligandPart>
</feature>
<proteinExistence type="inferred from homology"/>
<keyword id="KW-0249">Electron transport</keyword>
<keyword id="KW-0349">Heme</keyword>
<keyword id="KW-0408">Iron</keyword>
<keyword id="KW-0472">Membrane</keyword>
<keyword id="KW-0479">Metal-binding</keyword>
<keyword id="KW-0602">Photosynthesis</keyword>
<keyword id="KW-0604">Photosystem II</keyword>
<keyword id="KW-1185">Reference proteome</keyword>
<keyword id="KW-0732">Signal</keyword>
<keyword id="KW-0793">Thylakoid</keyword>
<keyword id="KW-0813">Transport</keyword>
<name>CY550_ACAM1</name>
<organism>
    <name type="scientific">Acaryochloris marina (strain MBIC 11017)</name>
    <dbReference type="NCBI Taxonomy" id="329726"/>
    <lineage>
        <taxon>Bacteria</taxon>
        <taxon>Bacillati</taxon>
        <taxon>Cyanobacteriota</taxon>
        <taxon>Cyanophyceae</taxon>
        <taxon>Acaryochloridales</taxon>
        <taxon>Acaryochloridaceae</taxon>
        <taxon>Acaryochloris</taxon>
    </lineage>
</organism>
<comment type="function">
    <text evidence="1">One of the extrinsic, lumenal subunits of photosystem II (PSII). PSII is a light-driven water plastoquinone oxidoreductase, using light energy to abstract electrons from H(2)O, generating a proton gradient subsequently used for ATP formation. The extrinsic proteins stabilize the structure of photosystem II oxygen-evolving complex (OEC), the ion environment of oxygen evolution and protect the OEC against heat-induced inactivation. Low-potential cytochrome c that plays a role in the OEC of PSII.</text>
</comment>
<comment type="cofactor">
    <cofactor evidence="1">
        <name>heme c</name>
        <dbReference type="ChEBI" id="CHEBI:61717"/>
    </cofactor>
    <text evidence="1">Binds 1 heme c group covalently per subunit.</text>
</comment>
<comment type="subunit">
    <text evidence="1">PSII is composed of 1 copy each of membrane proteins PsbA, PsbB, PsbC, PsbD, PsbE, PsbF, PsbH, PsbI, PsbJ, PsbK, PsbL, PsbM, PsbT, PsbX, PsbY, PsbZ, Psb30/Ycf12, peripheral proteins PsbO, CyanoQ (PsbQ), PsbU, PsbV and a large number of cofactors. It forms dimeric complexes.</text>
</comment>
<comment type="subcellular location">
    <subcellularLocation>
        <location evidence="1">Cellular thylakoid membrane</location>
        <topology evidence="1">Peripheral membrane protein</topology>
        <orientation evidence="1">Lumenal side</orientation>
    </subcellularLocation>
    <text evidence="1">Associated with photosystem II at the lumenal side of the thylakoid membrane.</text>
</comment>
<comment type="similarity">
    <text evidence="1">Belongs to the cytochrome c family. PsbV subfamily.</text>
</comment>
<gene>
    <name evidence="1" type="primary">psbV</name>
    <name type="ordered locus">AM1_3885</name>
</gene>
<sequence>MLKRYMLLAVATVFFAFQVLTSTATAAELDDATRTVALNEGSTVTLSTQQAKEGQRLFNFACANCHIGGDTKTNPSINLSSASLAGANPRRDNVEGLVDYMNNPTTYDGFDTISEVHPSTQSTDVFPLMRNLSDEDLFDIAGHILIQPSVIGDQWGGGKANR</sequence>
<dbReference type="EMBL" id="CP000828">
    <property type="protein sequence ID" value="ABW28870.1"/>
    <property type="molecule type" value="Genomic_DNA"/>
</dbReference>
<dbReference type="RefSeq" id="WP_012164235.1">
    <property type="nucleotide sequence ID" value="NC_009925.1"/>
</dbReference>
<dbReference type="SMR" id="B0C731"/>
<dbReference type="STRING" id="329726.AM1_3885"/>
<dbReference type="KEGG" id="amr:AM1_3885"/>
<dbReference type="eggNOG" id="COG2010">
    <property type="taxonomic scope" value="Bacteria"/>
</dbReference>
<dbReference type="HOGENOM" id="CLU_104149_1_0_3"/>
<dbReference type="OrthoDB" id="486949at2"/>
<dbReference type="Proteomes" id="UP000000268">
    <property type="component" value="Chromosome"/>
</dbReference>
<dbReference type="GO" id="GO:0009523">
    <property type="term" value="C:photosystem II"/>
    <property type="evidence" value="ECO:0007669"/>
    <property type="project" value="UniProtKB-KW"/>
</dbReference>
<dbReference type="GO" id="GO:0031676">
    <property type="term" value="C:plasma membrane-derived thylakoid membrane"/>
    <property type="evidence" value="ECO:0007669"/>
    <property type="project" value="UniProtKB-SubCell"/>
</dbReference>
<dbReference type="GO" id="GO:0009055">
    <property type="term" value="F:electron transfer activity"/>
    <property type="evidence" value="ECO:0007669"/>
    <property type="project" value="InterPro"/>
</dbReference>
<dbReference type="GO" id="GO:0020037">
    <property type="term" value="F:heme binding"/>
    <property type="evidence" value="ECO:0007669"/>
    <property type="project" value="InterPro"/>
</dbReference>
<dbReference type="GO" id="GO:0005506">
    <property type="term" value="F:iron ion binding"/>
    <property type="evidence" value="ECO:0007669"/>
    <property type="project" value="InterPro"/>
</dbReference>
<dbReference type="GO" id="GO:0019684">
    <property type="term" value="P:photosynthesis, light reaction"/>
    <property type="evidence" value="ECO:0007669"/>
    <property type="project" value="UniProtKB-UniRule"/>
</dbReference>
<dbReference type="GO" id="GO:0022904">
    <property type="term" value="P:respiratory electron transport chain"/>
    <property type="evidence" value="ECO:0007669"/>
    <property type="project" value="InterPro"/>
</dbReference>
<dbReference type="Gene3D" id="1.10.760.10">
    <property type="entry name" value="Cytochrome c-like domain"/>
    <property type="match status" value="1"/>
</dbReference>
<dbReference type="HAMAP" id="MF_01378">
    <property type="entry name" value="PSII_Cyt550"/>
    <property type="match status" value="1"/>
</dbReference>
<dbReference type="InterPro" id="IPR009056">
    <property type="entry name" value="Cyt_c-like_dom"/>
</dbReference>
<dbReference type="InterPro" id="IPR036909">
    <property type="entry name" value="Cyt_c-like_dom_sf"/>
</dbReference>
<dbReference type="InterPro" id="IPR029490">
    <property type="entry name" value="Cytochrom_C550"/>
</dbReference>
<dbReference type="InterPro" id="IPR017851">
    <property type="entry name" value="PsbV_cyt_c550"/>
</dbReference>
<dbReference type="InterPro" id="IPR016003">
    <property type="entry name" value="PsbV_cyt_c550-like"/>
</dbReference>
<dbReference type="NCBIfam" id="TIGR03045">
    <property type="entry name" value="PS_II_C550"/>
    <property type="match status" value="1"/>
</dbReference>
<dbReference type="Pfam" id="PF14495">
    <property type="entry name" value="Cytochrom_C550"/>
    <property type="match status" value="1"/>
</dbReference>
<dbReference type="PIRSF" id="PIRSF005890">
    <property type="entry name" value="Phot_II_cyt_c550"/>
    <property type="match status" value="1"/>
</dbReference>
<dbReference type="SUPFAM" id="SSF46626">
    <property type="entry name" value="Cytochrome c"/>
    <property type="match status" value="1"/>
</dbReference>
<dbReference type="PROSITE" id="PS51007">
    <property type="entry name" value="CYTC"/>
    <property type="match status" value="1"/>
</dbReference>
<evidence type="ECO:0000255" key="1">
    <source>
        <dbReference type="HAMAP-Rule" id="MF_01378"/>
    </source>
</evidence>
<protein>
    <recommendedName>
        <fullName evidence="1">Photosystem II extrinsic protein V</fullName>
        <shortName evidence="1">PsbV</shortName>
    </recommendedName>
    <alternativeName>
        <fullName evidence="1">Cytochrome c-550</fullName>
    </alternativeName>
    <alternativeName>
        <fullName evidence="1">Cytochrome c550</fullName>
    </alternativeName>
    <alternativeName>
        <fullName evidence="1">Low-potential cytochrome c</fullName>
    </alternativeName>
</protein>